<reference key="1">
    <citation type="journal article" date="2011" name="ISME J.">
        <title>Comparative genomics reveals a deep-sea sediment-adapted life style of Pseudoalteromonas sp. SM9913.</title>
        <authorList>
            <person name="Qin Q.L."/>
            <person name="Li Y."/>
            <person name="Zhang Y.J."/>
            <person name="Zhou Z.M."/>
            <person name="Zhang W.X."/>
            <person name="Chen X.L."/>
            <person name="Zhang X.Y."/>
            <person name="Zhou B.C."/>
            <person name="Wang L."/>
            <person name="Zhang Y.Z."/>
        </authorList>
    </citation>
    <scope>NUCLEOTIDE SEQUENCE [LARGE SCALE GENOMIC DNA]</scope>
    <source>
        <strain>SM9913</strain>
    </source>
</reference>
<protein>
    <recommendedName>
        <fullName evidence="1">Outer membrane protein assembly factor BamC</fullName>
    </recommendedName>
</protein>
<evidence type="ECO:0000255" key="1">
    <source>
        <dbReference type="HAMAP-Rule" id="MF_00924"/>
    </source>
</evidence>
<comment type="function">
    <text evidence="1">Part of the outer membrane protein assembly complex, which is involved in assembly and insertion of beta-barrel proteins into the outer membrane.</text>
</comment>
<comment type="subunit">
    <text evidence="1">Part of the Bam complex.</text>
</comment>
<comment type="subcellular location">
    <subcellularLocation>
        <location evidence="1">Cell outer membrane</location>
        <topology evidence="1">Lipid-anchor</topology>
    </subcellularLocation>
</comment>
<comment type="similarity">
    <text evidence="1">Belongs to the BamC family.</text>
</comment>
<keyword id="KW-0998">Cell outer membrane</keyword>
<keyword id="KW-0449">Lipoprotein</keyword>
<keyword id="KW-0472">Membrane</keyword>
<keyword id="KW-0564">Palmitate</keyword>
<keyword id="KW-0732">Signal</keyword>
<organism>
    <name type="scientific">Pseudoalteromonas sp. (strain SM9913)</name>
    <dbReference type="NCBI Taxonomy" id="234831"/>
    <lineage>
        <taxon>Bacteria</taxon>
        <taxon>Pseudomonadati</taxon>
        <taxon>Pseudomonadota</taxon>
        <taxon>Gammaproteobacteria</taxon>
        <taxon>Alteromonadales</taxon>
        <taxon>Pseudoalteromonadaceae</taxon>
        <taxon>Pseudoalteromonas</taxon>
    </lineage>
</organism>
<accession>E6RM71</accession>
<proteinExistence type="inferred from homology"/>
<gene>
    <name evidence="1" type="primary">bamC</name>
    <name type="ordered locus">PSM_A1902</name>
</gene>
<feature type="signal peptide" evidence="1">
    <location>
        <begin position="1"/>
        <end position="19"/>
    </location>
</feature>
<feature type="chain" id="PRO_0000417821" description="Outer membrane protein assembly factor BamC">
    <location>
        <begin position="20"/>
        <end position="352"/>
    </location>
</feature>
<feature type="lipid moiety-binding region" description="N-palmitoyl cysteine" evidence="1">
    <location>
        <position position="20"/>
    </location>
</feature>
<feature type="lipid moiety-binding region" description="S-diacylglycerol cysteine" evidence="1">
    <location>
        <position position="20"/>
    </location>
</feature>
<name>BAMC_PSEU9</name>
<dbReference type="EMBL" id="CP001796">
    <property type="protein sequence ID" value="ADT68826.1"/>
    <property type="molecule type" value="Genomic_DNA"/>
</dbReference>
<dbReference type="RefSeq" id="WP_013465262.1">
    <property type="nucleotide sequence ID" value="NC_014803.1"/>
</dbReference>
<dbReference type="SMR" id="E6RM71"/>
<dbReference type="KEGG" id="psm:PSM_A1902"/>
<dbReference type="HOGENOM" id="CLU_063217_0_0_6"/>
<dbReference type="GO" id="GO:0009279">
    <property type="term" value="C:cell outer membrane"/>
    <property type="evidence" value="ECO:0007669"/>
    <property type="project" value="UniProtKB-SubCell"/>
</dbReference>
<dbReference type="GO" id="GO:0043165">
    <property type="term" value="P:Gram-negative-bacterium-type cell outer membrane assembly"/>
    <property type="evidence" value="ECO:0007669"/>
    <property type="project" value="UniProtKB-UniRule"/>
</dbReference>
<dbReference type="GO" id="GO:0051205">
    <property type="term" value="P:protein insertion into membrane"/>
    <property type="evidence" value="ECO:0007669"/>
    <property type="project" value="UniProtKB-UniRule"/>
</dbReference>
<dbReference type="Gene3D" id="3.30.530.50">
    <property type="match status" value="1"/>
</dbReference>
<dbReference type="Gene3D" id="3.30.310.170">
    <property type="entry name" value="Outer membrane protein assembly factor BamC"/>
    <property type="match status" value="1"/>
</dbReference>
<dbReference type="HAMAP" id="MF_00924">
    <property type="entry name" value="OM_assembly_BamC"/>
    <property type="match status" value="1"/>
</dbReference>
<dbReference type="InterPro" id="IPR014524">
    <property type="entry name" value="BamC"/>
</dbReference>
<dbReference type="InterPro" id="IPR042268">
    <property type="entry name" value="BamC_C"/>
</dbReference>
<dbReference type="InterPro" id="IPR010653">
    <property type="entry name" value="NlpB/DapX"/>
</dbReference>
<dbReference type="Pfam" id="PF06804">
    <property type="entry name" value="Lipoprotein_18"/>
    <property type="match status" value="1"/>
</dbReference>
<dbReference type="PROSITE" id="PS51257">
    <property type="entry name" value="PROKAR_LIPOPROTEIN"/>
    <property type="match status" value="1"/>
</dbReference>
<sequence length="352" mass="39805">MQYWIPKALAVSVLVSLSGCSVFTSDAHNERNYRAHEPVKAPASLSQPAQDPVYKMDVGQYDNNPEATNYRPPAQVLTIAKGSWVEEADKQARIYFDKNDGIEDLDVFIWDSIQAVLADNNISATQLDKTQGTLVTDWYAIVKPEESWLWGNDESVDLERFKFTIEEKEHQRTASLTAELIDFKGDKPLTDLLKQQLEVRALNQVVSEFDYRYRQLEVDMRKRQGIISLELGFDNKGNAALVTEQAYDTVFDRFSGFLERLSFTIVEINQETGLITADYAKVESSVWDSIWGDEPTELPIDEGQYQILVSKTKQGGTSLTWMDDKGETLEPGTMNGLQQALEAALIKRGIKI</sequence>